<comment type="function">
    <text evidence="1">Catalyzes the reversible reduction of methenyl-H(4)MPT(+) to methylene-H(4)MPT.</text>
</comment>
<comment type="catalytic activity">
    <reaction>
        <text>5,10-methenyl-5,6,7,8-tetrahydromethanopterin + H2 = 5,10-methylenetetrahydromethanopterin + H(+)</text>
        <dbReference type="Rhea" id="RHEA:20017"/>
        <dbReference type="ChEBI" id="CHEBI:15378"/>
        <dbReference type="ChEBI" id="CHEBI:18276"/>
        <dbReference type="ChEBI" id="CHEBI:57818"/>
        <dbReference type="ChEBI" id="CHEBI:58337"/>
        <dbReference type="EC" id="1.12.98.2"/>
    </reaction>
</comment>
<comment type="pathway">
    <text>One-carbon metabolism; methanogenesis from CO(2); 5,10-methylene-5,6,7,8-tetrahydromethanopterin from 5,10-methenyl-5,6,7,8-tetrahydromethanopterin (hydrogen route): step 1/1.</text>
</comment>
<comment type="similarity">
    <text evidence="2">Belongs to the HMD family.</text>
</comment>
<comment type="sequence caution" evidence="2">
    <conflict type="erroneous initiation">
        <sequence resource="EMBL-CDS" id="AAB85631"/>
    </conflict>
</comment>
<dbReference type="EC" id="1.12.98.2"/>
<dbReference type="EMBL" id="U19363">
    <property type="protein sequence ID" value="AAA87423.1"/>
    <property type="molecule type" value="Genomic_DNA"/>
</dbReference>
<dbReference type="EMBL" id="AE000666">
    <property type="protein sequence ID" value="AAB85631.1"/>
    <property type="status" value="ALT_INIT"/>
    <property type="molecule type" value="Genomic_DNA"/>
</dbReference>
<dbReference type="PIR" id="B69019">
    <property type="entry name" value="B69019"/>
</dbReference>
<dbReference type="RefSeq" id="WP_048060977.1">
    <property type="nucleotide sequence ID" value="NC_000916.1"/>
</dbReference>
<dbReference type="SMR" id="O27211"/>
<dbReference type="FunCoup" id="O27211">
    <property type="interactions" value="66"/>
</dbReference>
<dbReference type="STRING" id="187420.MTH_1142"/>
<dbReference type="PaxDb" id="187420-MTH_1142"/>
<dbReference type="EnsemblBacteria" id="AAB85631">
    <property type="protein sequence ID" value="AAB85631"/>
    <property type="gene ID" value="MTH_1142"/>
</dbReference>
<dbReference type="GeneID" id="1471550"/>
<dbReference type="GeneID" id="77401671"/>
<dbReference type="KEGG" id="mth:MTH_1142"/>
<dbReference type="PATRIC" id="fig|187420.15.peg.1119"/>
<dbReference type="HOGENOM" id="CLU_772960_0_0_2"/>
<dbReference type="InParanoid" id="O27211"/>
<dbReference type="BioCyc" id="MetaCyc:HMDMAUTO-MONOMER"/>
<dbReference type="UniPathway" id="UPA00640">
    <property type="reaction ID" value="UER00696"/>
</dbReference>
<dbReference type="Proteomes" id="UP000005223">
    <property type="component" value="Chromosome"/>
</dbReference>
<dbReference type="GO" id="GO:0047068">
    <property type="term" value="F:N5,N10-methenyltetrahydromethanopterin hydrogenase activity"/>
    <property type="evidence" value="ECO:0007669"/>
    <property type="project" value="UniProtKB-UniRule"/>
</dbReference>
<dbReference type="GO" id="GO:0019386">
    <property type="term" value="P:methanogenesis, from carbon dioxide"/>
    <property type="evidence" value="ECO:0007669"/>
    <property type="project" value="UniProtKB-UniRule"/>
</dbReference>
<dbReference type="GO" id="GO:0006730">
    <property type="term" value="P:one-carbon metabolic process"/>
    <property type="evidence" value="ECO:0007669"/>
    <property type="project" value="UniProtKB-UniRule"/>
</dbReference>
<dbReference type="FunFam" id="1.20.120.1300:FF:000001">
    <property type="entry name" value="5,10-methenyltetrahydromethanopterin hydrogenase"/>
    <property type="match status" value="1"/>
</dbReference>
<dbReference type="FunFam" id="3.40.50.720:FF:001042">
    <property type="entry name" value="5,10-methenyltetrahydromethanopterin hydrogenase"/>
    <property type="match status" value="1"/>
</dbReference>
<dbReference type="Gene3D" id="1.20.120.1300">
    <property type="entry name" value="Hmd, C-terminal helical subdomain"/>
    <property type="match status" value="1"/>
</dbReference>
<dbReference type="Gene3D" id="3.40.50.720">
    <property type="entry name" value="NAD(P)-binding Rossmann-like Domain"/>
    <property type="match status" value="1"/>
</dbReference>
<dbReference type="HAMAP" id="MF_01090">
    <property type="entry name" value="HMD"/>
    <property type="match status" value="1"/>
</dbReference>
<dbReference type="InterPro" id="IPR008927">
    <property type="entry name" value="6-PGluconate_DH-like_C_sf"/>
</dbReference>
<dbReference type="InterPro" id="IPR010062">
    <property type="entry name" value="HMD"/>
</dbReference>
<dbReference type="InterPro" id="IPR004889">
    <property type="entry name" value="HMD_C"/>
</dbReference>
<dbReference type="InterPro" id="IPR038182">
    <property type="entry name" value="HMD_C_sf"/>
</dbReference>
<dbReference type="InterPro" id="IPR055205">
    <property type="entry name" value="HMD_N"/>
</dbReference>
<dbReference type="InterPro" id="IPR024190">
    <property type="entry name" value="METHMP_Hmd"/>
</dbReference>
<dbReference type="InterPro" id="IPR036291">
    <property type="entry name" value="NAD(P)-bd_dom_sf"/>
</dbReference>
<dbReference type="NCBIfam" id="TIGR01723">
    <property type="entry name" value="hmd_TIGR"/>
    <property type="match status" value="1"/>
</dbReference>
<dbReference type="Pfam" id="PF03201">
    <property type="entry name" value="HMD"/>
    <property type="match status" value="1"/>
</dbReference>
<dbReference type="Pfam" id="PF22616">
    <property type="entry name" value="HMD_N"/>
    <property type="match status" value="1"/>
</dbReference>
<dbReference type="PIRSF" id="PIRSF016158">
    <property type="entry name" value="HMD"/>
    <property type="match status" value="1"/>
</dbReference>
<dbReference type="PIRSF" id="PIRSF500165">
    <property type="entry name" value="HMDI"/>
    <property type="match status" value="1"/>
</dbReference>
<dbReference type="SUPFAM" id="SSF48179">
    <property type="entry name" value="6-phosphogluconate dehydrogenase C-terminal domain-like"/>
    <property type="match status" value="1"/>
</dbReference>
<dbReference type="SUPFAM" id="SSF51735">
    <property type="entry name" value="NAD(P)-binding Rossmann-fold domains"/>
    <property type="match status" value="1"/>
</dbReference>
<name>HMD_METTH</name>
<feature type="chain" id="PRO_0000218511" description="5,10-methenyltetrahydromethanopterin hydrogenase">
    <location>
        <begin position="1"/>
        <end position="344"/>
    </location>
</feature>
<sequence>MKLAILGAGCYRTHAASGITNFSRACEVAEMVGKPEIAMTHSTITMGAELKELAGVDEVVVADPVFDNQFTVIDDFAYEDVIEAHKEDPEKIMPQIREKVNEVAKELPKPPEGAIHFTHPEDLGFEITTDDREAVADADFIMTWFPKGDMQPGIIDKFIDDIKPGAIVTHACTIPTTKFYKIFEEKHGDLVTKPETLNVTSYHPGAVPEMKGQVYIAEGYASEEAINTLFELGQKARGNAYRLPAELLGPVCDMCSALTAITYAGILSYRDSVTQVLGAPAGFAQMMAKESLEQITALMEKVGIDKMEEHLDPGALLGTADSMNFGASADILPTVFEILEKRKK</sequence>
<keyword id="KW-0484">Methanogenesis</keyword>
<keyword id="KW-0554">One-carbon metabolism</keyword>
<keyword id="KW-0560">Oxidoreductase</keyword>
<keyword id="KW-1185">Reference proteome</keyword>
<accession>O27211</accession>
<accession>Q50512</accession>
<organism>
    <name type="scientific">Methanothermobacter thermautotrophicus (strain ATCC 29096 / DSM 1053 / JCM 10044 / NBRC 100330 / Delta H)</name>
    <name type="common">Methanobacterium thermoautotrophicum</name>
    <dbReference type="NCBI Taxonomy" id="187420"/>
    <lineage>
        <taxon>Archaea</taxon>
        <taxon>Methanobacteriati</taxon>
        <taxon>Methanobacteriota</taxon>
        <taxon>Methanomada group</taxon>
        <taxon>Methanobacteria</taxon>
        <taxon>Methanobacteriales</taxon>
        <taxon>Methanobacteriaceae</taxon>
        <taxon>Methanothermobacter</taxon>
    </lineage>
</organism>
<protein>
    <recommendedName>
        <fullName>5,10-methenyltetrahydromethanopterin hydrogenase</fullName>
        <ecNumber>1.12.98.2</ecNumber>
    </recommendedName>
    <alternativeName>
        <fullName>H(2)-dependent methylene-H(4)MPT dehydrogenase</fullName>
    </alternativeName>
    <alternativeName>
        <fullName>H(2)-forming N(5),N(10)-methylenetetrahydromethanopterin dehydrogenase</fullName>
    </alternativeName>
    <alternativeName>
        <fullName>N(5),N(10)-methenyltetrahydromethanopterin hydrogenase</fullName>
    </alternativeName>
</protein>
<gene>
    <name type="primary">hmd</name>
    <name type="synonym">mth</name>
    <name type="ordered locus">MTH_1142</name>
</gene>
<reference key="1">
    <citation type="journal article" date="1995" name="J. Bacteriol.">
        <title>Organization and growth phase-dependent transcription of methane genes in two regions of the Methanobacterium thermoautotrophicum genome.</title>
        <authorList>
            <person name="Noelling J."/>
            <person name="Pihl T.D."/>
            <person name="Vriesema A."/>
            <person name="Reeve J.N."/>
        </authorList>
    </citation>
    <scope>NUCLEOTIDE SEQUENCE [GENOMIC DNA]</scope>
    <source>
        <strain>ATCC 29096 / DSM 1053 / JCM 10044 / NBRC 100330 / Delta H</strain>
    </source>
</reference>
<reference key="2">
    <citation type="journal article" date="1997" name="J. Bacteriol.">
        <title>Complete genome sequence of Methanobacterium thermoautotrophicum deltaH: functional analysis and comparative genomics.</title>
        <authorList>
            <person name="Smith D.R."/>
            <person name="Doucette-Stamm L.A."/>
            <person name="Deloughery C."/>
            <person name="Lee H.-M."/>
            <person name="Dubois J."/>
            <person name="Aldredge T."/>
            <person name="Bashirzadeh R."/>
            <person name="Blakely D."/>
            <person name="Cook R."/>
            <person name="Gilbert K."/>
            <person name="Harrison D."/>
            <person name="Hoang L."/>
            <person name="Keagle P."/>
            <person name="Lumm W."/>
            <person name="Pothier B."/>
            <person name="Qiu D."/>
            <person name="Spadafora R."/>
            <person name="Vicare R."/>
            <person name="Wang Y."/>
            <person name="Wierzbowski J."/>
            <person name="Gibson R."/>
            <person name="Jiwani N."/>
            <person name="Caruso A."/>
            <person name="Bush D."/>
            <person name="Safer H."/>
            <person name="Patwell D."/>
            <person name="Prabhakar S."/>
            <person name="McDougall S."/>
            <person name="Shimer G."/>
            <person name="Goyal A."/>
            <person name="Pietrovski S."/>
            <person name="Church G.M."/>
            <person name="Daniels C.J."/>
            <person name="Mao J.-I."/>
            <person name="Rice P."/>
            <person name="Noelling J."/>
            <person name="Reeve J.N."/>
        </authorList>
    </citation>
    <scope>NUCLEOTIDE SEQUENCE [LARGE SCALE GENOMIC DNA]</scope>
    <source>
        <strain>ATCC 29096 / DSM 1053 / JCM 10044 / NBRC 100330 / Delta H</strain>
    </source>
</reference>
<proteinExistence type="inferred from homology"/>
<evidence type="ECO:0000250" key="1"/>
<evidence type="ECO:0000305" key="2"/>